<dbReference type="EC" id="5.6.2.2" evidence="1"/>
<dbReference type="EMBL" id="AE004437">
    <property type="protein sequence ID" value="AAG19326.1"/>
    <property type="molecule type" value="Genomic_DNA"/>
</dbReference>
<dbReference type="PIR" id="B84245">
    <property type="entry name" value="B84245"/>
</dbReference>
<dbReference type="RefSeq" id="WP_010902622.1">
    <property type="nucleotide sequence ID" value="NC_002607.1"/>
</dbReference>
<dbReference type="SMR" id="Q9HR32"/>
<dbReference type="FunCoup" id="Q9HR32">
    <property type="interactions" value="14"/>
</dbReference>
<dbReference type="STRING" id="64091.VNG_0884G"/>
<dbReference type="PaxDb" id="64091-VNG_0884G"/>
<dbReference type="KEGG" id="hal:VNG_0884G"/>
<dbReference type="PATRIC" id="fig|64091.14.peg.679"/>
<dbReference type="HOGENOM" id="CLU_037229_1_0_2"/>
<dbReference type="InParanoid" id="Q9HR32"/>
<dbReference type="OrthoDB" id="5866at2157"/>
<dbReference type="PhylomeDB" id="Q9HR32"/>
<dbReference type="Proteomes" id="UP000000554">
    <property type="component" value="Chromosome"/>
</dbReference>
<dbReference type="GO" id="GO:0005694">
    <property type="term" value="C:chromosome"/>
    <property type="evidence" value="ECO:0007669"/>
    <property type="project" value="InterPro"/>
</dbReference>
<dbReference type="GO" id="GO:0005524">
    <property type="term" value="F:ATP binding"/>
    <property type="evidence" value="ECO:0007669"/>
    <property type="project" value="UniProtKB-KW"/>
</dbReference>
<dbReference type="GO" id="GO:0003677">
    <property type="term" value="F:DNA binding"/>
    <property type="evidence" value="ECO:0000318"/>
    <property type="project" value="GO_Central"/>
</dbReference>
<dbReference type="GO" id="GO:0003918">
    <property type="term" value="F:DNA topoisomerase type II (double strand cut, ATP-hydrolyzing) activity"/>
    <property type="evidence" value="ECO:0007669"/>
    <property type="project" value="UniProtKB-UniRule"/>
</dbReference>
<dbReference type="GO" id="GO:0000287">
    <property type="term" value="F:magnesium ion binding"/>
    <property type="evidence" value="ECO:0007669"/>
    <property type="project" value="UniProtKB-UniRule"/>
</dbReference>
<dbReference type="GO" id="GO:0006265">
    <property type="term" value="P:DNA topological change"/>
    <property type="evidence" value="ECO:0007669"/>
    <property type="project" value="UniProtKB-UniRule"/>
</dbReference>
<dbReference type="CDD" id="cd00223">
    <property type="entry name" value="TOPRIM_TopoIIB_SPO"/>
    <property type="match status" value="1"/>
</dbReference>
<dbReference type="FunFam" id="1.10.10.10:FF:000655">
    <property type="entry name" value="Type 2 DNA topoisomerase 6 subunit A"/>
    <property type="match status" value="1"/>
</dbReference>
<dbReference type="FunFam" id="3.40.1360.10:FF:000011">
    <property type="entry name" value="Type 2 DNA topoisomerase 6 subunit A"/>
    <property type="match status" value="1"/>
</dbReference>
<dbReference type="Gene3D" id="3.40.1360.10">
    <property type="match status" value="1"/>
</dbReference>
<dbReference type="Gene3D" id="1.10.10.10">
    <property type="entry name" value="Winged helix-like DNA-binding domain superfamily/Winged helix DNA-binding domain"/>
    <property type="match status" value="1"/>
</dbReference>
<dbReference type="HAMAP" id="MF_00132">
    <property type="entry name" value="Top6A"/>
    <property type="match status" value="1"/>
</dbReference>
<dbReference type="InterPro" id="IPR002815">
    <property type="entry name" value="Spo11/TopoVI_A"/>
</dbReference>
<dbReference type="InterPro" id="IPR013049">
    <property type="entry name" value="Spo11/TopoVI_A_N"/>
</dbReference>
<dbReference type="InterPro" id="IPR036078">
    <property type="entry name" value="Spo11/TopoVI_A_sf"/>
</dbReference>
<dbReference type="InterPro" id="IPR049333">
    <property type="entry name" value="Topo_VI_alpha"/>
</dbReference>
<dbReference type="InterPro" id="IPR004085">
    <property type="entry name" value="TopoVI_A"/>
</dbReference>
<dbReference type="InterPro" id="IPR034136">
    <property type="entry name" value="TOPRIM_Topo6A/Spo11"/>
</dbReference>
<dbReference type="InterPro" id="IPR036388">
    <property type="entry name" value="WH-like_DNA-bd_sf"/>
</dbReference>
<dbReference type="NCBIfam" id="NF003332">
    <property type="entry name" value="PRK04342.1-1"/>
    <property type="match status" value="1"/>
</dbReference>
<dbReference type="PANTHER" id="PTHR10848">
    <property type="entry name" value="MEIOTIC RECOMBINATION PROTEIN SPO11"/>
    <property type="match status" value="1"/>
</dbReference>
<dbReference type="PANTHER" id="PTHR10848:SF0">
    <property type="entry name" value="MEIOTIC RECOMBINATION PROTEIN SPO11"/>
    <property type="match status" value="1"/>
</dbReference>
<dbReference type="Pfam" id="PF21180">
    <property type="entry name" value="TOP6A-Spo11_Toprim"/>
    <property type="match status" value="1"/>
</dbReference>
<dbReference type="Pfam" id="PF20768">
    <property type="entry name" value="Topo_VI_alpha"/>
    <property type="match status" value="1"/>
</dbReference>
<dbReference type="Pfam" id="PF04406">
    <property type="entry name" value="TP6A_N"/>
    <property type="match status" value="1"/>
</dbReference>
<dbReference type="PRINTS" id="PR01550">
    <property type="entry name" value="TOP6AFAMILY"/>
</dbReference>
<dbReference type="PRINTS" id="PR01552">
    <property type="entry name" value="TPISMRASE6A"/>
</dbReference>
<dbReference type="SUPFAM" id="SSF56726">
    <property type="entry name" value="DNA topoisomerase IV, alpha subunit"/>
    <property type="match status" value="1"/>
</dbReference>
<dbReference type="PROSITE" id="PS52041">
    <property type="entry name" value="TOPO_IIB"/>
    <property type="match status" value="1"/>
</dbReference>
<comment type="function">
    <text evidence="1">Relaxes both positive and negative superturns and exhibits a strong decatenase activity.</text>
</comment>
<comment type="catalytic activity">
    <reaction evidence="1">
        <text>ATP-dependent breakage, passage and rejoining of double-stranded DNA.</text>
        <dbReference type="EC" id="5.6.2.2"/>
    </reaction>
</comment>
<comment type="cofactor">
    <cofactor evidence="1">
        <name>Mg(2+)</name>
        <dbReference type="ChEBI" id="CHEBI:18420"/>
    </cofactor>
</comment>
<comment type="subunit">
    <text evidence="1">Homodimer. Heterotetramer of two Top6A and two Top6B chains.</text>
</comment>
<comment type="similarity">
    <text evidence="1">Belongs to the TOP6A family.</text>
</comment>
<proteinExistence type="inferred from homology"/>
<name>TOP6A_HALSA</name>
<feature type="chain" id="PRO_0000145447" description="Type 2 DNA topoisomerase 6 subunit A">
    <location>
        <begin position="1"/>
        <end position="366"/>
    </location>
</feature>
<feature type="domain" description="Topo IIA-type catalytic" evidence="2">
    <location>
        <begin position="7"/>
        <end position="146"/>
    </location>
</feature>
<feature type="active site" description="O-(5'-phospho-DNA)-tyrosine intermediate" evidence="2">
    <location>
        <position position="101"/>
    </location>
</feature>
<feature type="binding site" evidence="1">
    <location>
        <position position="199"/>
    </location>
    <ligand>
        <name>Mg(2+)</name>
        <dbReference type="ChEBI" id="CHEBI:18420"/>
    </ligand>
</feature>
<feature type="binding site" evidence="1">
    <location>
        <position position="251"/>
    </location>
    <ligand>
        <name>Mg(2+)</name>
        <dbReference type="ChEBI" id="CHEBI:18420"/>
    </ligand>
</feature>
<organism>
    <name type="scientific">Halobacterium salinarum (strain ATCC 700922 / JCM 11081 / NRC-1)</name>
    <name type="common">Halobacterium halobium</name>
    <dbReference type="NCBI Taxonomy" id="64091"/>
    <lineage>
        <taxon>Archaea</taxon>
        <taxon>Methanobacteriati</taxon>
        <taxon>Methanobacteriota</taxon>
        <taxon>Stenosarchaea group</taxon>
        <taxon>Halobacteria</taxon>
        <taxon>Halobacteriales</taxon>
        <taxon>Halobacteriaceae</taxon>
        <taxon>Halobacterium</taxon>
        <taxon>Halobacterium salinarum NRC-34001</taxon>
    </lineage>
</organism>
<keyword id="KW-0067">ATP-binding</keyword>
<keyword id="KW-0238">DNA-binding</keyword>
<keyword id="KW-0413">Isomerase</keyword>
<keyword id="KW-0460">Magnesium</keyword>
<keyword id="KW-0479">Metal-binding</keyword>
<keyword id="KW-0547">Nucleotide-binding</keyword>
<keyword id="KW-1185">Reference proteome</keyword>
<keyword id="KW-0799">Topoisomerase</keyword>
<reference key="1">
    <citation type="journal article" date="2000" name="Proc. Natl. Acad. Sci. U.S.A.">
        <title>Genome sequence of Halobacterium species NRC-1.</title>
        <authorList>
            <person name="Ng W.V."/>
            <person name="Kennedy S.P."/>
            <person name="Mahairas G.G."/>
            <person name="Berquist B."/>
            <person name="Pan M."/>
            <person name="Shukla H.D."/>
            <person name="Lasky S.R."/>
            <person name="Baliga N.S."/>
            <person name="Thorsson V."/>
            <person name="Sbrogna J."/>
            <person name="Swartzell S."/>
            <person name="Weir D."/>
            <person name="Hall J."/>
            <person name="Dahl T.A."/>
            <person name="Welti R."/>
            <person name="Goo Y.A."/>
            <person name="Leithauser B."/>
            <person name="Keller K."/>
            <person name="Cruz R."/>
            <person name="Danson M.J."/>
            <person name="Hough D.W."/>
            <person name="Maddocks D.G."/>
            <person name="Jablonski P.E."/>
            <person name="Krebs M.P."/>
            <person name="Angevine C.M."/>
            <person name="Dale H."/>
            <person name="Isenbarger T.A."/>
            <person name="Peck R.F."/>
            <person name="Pohlschroder M."/>
            <person name="Spudich J.L."/>
            <person name="Jung K.-H."/>
            <person name="Alam M."/>
            <person name="Freitas T."/>
            <person name="Hou S."/>
            <person name="Daniels C.J."/>
            <person name="Dennis P.P."/>
            <person name="Omer A.D."/>
            <person name="Ebhardt H."/>
            <person name="Lowe T.M."/>
            <person name="Liang P."/>
            <person name="Riley M."/>
            <person name="Hood L."/>
            <person name="DasSarma S."/>
        </authorList>
    </citation>
    <scope>NUCLEOTIDE SEQUENCE [LARGE SCALE GENOMIC DNA]</scope>
    <source>
        <strain>ATCC 700922 / JCM 11081 / NRC-1</strain>
    </source>
</reference>
<gene>
    <name evidence="1" type="primary">top6A</name>
    <name type="ordered locus">VNG_0884G</name>
</gene>
<accession>Q9HR32</accession>
<protein>
    <recommendedName>
        <fullName evidence="1">Type 2 DNA topoisomerase 6 subunit A</fullName>
        <ecNumber evidence="1">5.6.2.2</ecNumber>
    </recommendedName>
    <alternativeName>
        <fullName evidence="1">Type II DNA topoisomerase VI subunit A</fullName>
    </alternativeName>
</protein>
<evidence type="ECO:0000255" key="1">
    <source>
        <dbReference type="HAMAP-Rule" id="MF_00132"/>
    </source>
</evidence>
<evidence type="ECO:0000255" key="2">
    <source>
        <dbReference type="PROSITE-ProRule" id="PRU01385"/>
    </source>
</evidence>
<sequence length="366" mass="41449">MSETHTSDETEARDQLLAIAEQFYDQFADGDIPRMSLPTRSKSNIEYDEDADVWVYGDSQSTRSANSVRGARKLLKSVYTVDFLAQQLDEGRSSTLRELYYLSESWDEAEAQFNDQSESDKLVEDLEIVSGVKREDFHMRPEESGAKVMGPLRLREQTRRGDREIHCQEDVGQGGYQIPNNPDTIDFLDTDADFVLCVETGGMRDRLVENGFDDDYNAIVVHLGGQPARATRRLTKRLHDELDLPVTVFTDGDPWSYRIYGSVAYGSIKSAHLSEYLATPQAQFIGIRPQDIVDYDLPTDPLSDSDVNALESELEDPRFQSDFWTEQIGLQLDIDKKAEQQALASRGLDFVTDTYLPERLAEMGVL</sequence>